<proteinExistence type="inferred from homology"/>
<comment type="function">
    <text evidence="1">One of the primary rRNA binding proteins, this protein initially binds near the 5'-end of the 23S rRNA. It is important during the early stages of 50S assembly. It makes multiple contacts with different domains of the 23S rRNA in the assembled 50S subunit and ribosome.</text>
</comment>
<comment type="function">
    <text evidence="1">Forms part of the polypeptide exit tunnel.</text>
</comment>
<comment type="subunit">
    <text evidence="1">Part of the 50S ribosomal subunit.</text>
</comment>
<comment type="similarity">
    <text evidence="1">Belongs to the universal ribosomal protein uL4 family.</text>
</comment>
<gene>
    <name evidence="1" type="primary">rplD</name>
    <name evidence="1" type="synonym">rpl4</name>
    <name type="ordered locus">SYNW2068</name>
</gene>
<name>RL4_PARMW</name>
<sequence length="211" mass="23034">MADCVIRDWQGKEAGKATLDLKVAKETTANDLMHRAVLRQQAHARQGTASTLTRSEVRGGGRKPYKQKGTGRARQGSIRTPLRPGGGIVFGPKPRTYNLAMNRKERRLALRTALMARVEDVTVVKDFGTSLEAPKTKEITDALGRLGIAADAKVLIVLTEPSDVVRRSVRNLEKVKLIAANQLNVFDLLHANALVLGEDALATIQEVYGDD</sequence>
<evidence type="ECO:0000255" key="1">
    <source>
        <dbReference type="HAMAP-Rule" id="MF_01328"/>
    </source>
</evidence>
<evidence type="ECO:0000256" key="2">
    <source>
        <dbReference type="SAM" id="MobiDB-lite"/>
    </source>
</evidence>
<evidence type="ECO:0000305" key="3"/>
<reference key="1">
    <citation type="journal article" date="2003" name="Nature">
        <title>The genome of a motile marine Synechococcus.</title>
        <authorList>
            <person name="Palenik B."/>
            <person name="Brahamsha B."/>
            <person name="Larimer F.W."/>
            <person name="Land M.L."/>
            <person name="Hauser L."/>
            <person name="Chain P."/>
            <person name="Lamerdin J.E."/>
            <person name="Regala W."/>
            <person name="Allen E.E."/>
            <person name="McCarren J."/>
            <person name="Paulsen I.T."/>
            <person name="Dufresne A."/>
            <person name="Partensky F."/>
            <person name="Webb E.A."/>
            <person name="Waterbury J."/>
        </authorList>
    </citation>
    <scope>NUCLEOTIDE SEQUENCE [LARGE SCALE GENOMIC DNA]</scope>
    <source>
        <strain>WH8102</strain>
    </source>
</reference>
<dbReference type="EMBL" id="BX569694">
    <property type="protein sequence ID" value="CAE08583.1"/>
    <property type="molecule type" value="Genomic_DNA"/>
</dbReference>
<dbReference type="RefSeq" id="WP_011128926.1">
    <property type="nucleotide sequence ID" value="NC_005070.1"/>
</dbReference>
<dbReference type="SMR" id="Q7U4J9"/>
<dbReference type="STRING" id="84588.SYNW2068"/>
<dbReference type="KEGG" id="syw:SYNW2068"/>
<dbReference type="eggNOG" id="COG0088">
    <property type="taxonomic scope" value="Bacteria"/>
</dbReference>
<dbReference type="HOGENOM" id="CLU_041575_5_2_3"/>
<dbReference type="Proteomes" id="UP000001422">
    <property type="component" value="Chromosome"/>
</dbReference>
<dbReference type="GO" id="GO:1990904">
    <property type="term" value="C:ribonucleoprotein complex"/>
    <property type="evidence" value="ECO:0007669"/>
    <property type="project" value="UniProtKB-KW"/>
</dbReference>
<dbReference type="GO" id="GO:0005840">
    <property type="term" value="C:ribosome"/>
    <property type="evidence" value="ECO:0007669"/>
    <property type="project" value="UniProtKB-KW"/>
</dbReference>
<dbReference type="GO" id="GO:0019843">
    <property type="term" value="F:rRNA binding"/>
    <property type="evidence" value="ECO:0007669"/>
    <property type="project" value="UniProtKB-UniRule"/>
</dbReference>
<dbReference type="GO" id="GO:0003735">
    <property type="term" value="F:structural constituent of ribosome"/>
    <property type="evidence" value="ECO:0007669"/>
    <property type="project" value="InterPro"/>
</dbReference>
<dbReference type="GO" id="GO:0006412">
    <property type="term" value="P:translation"/>
    <property type="evidence" value="ECO:0007669"/>
    <property type="project" value="UniProtKB-UniRule"/>
</dbReference>
<dbReference type="Gene3D" id="3.40.1370.10">
    <property type="match status" value="1"/>
</dbReference>
<dbReference type="HAMAP" id="MF_01328_B">
    <property type="entry name" value="Ribosomal_uL4_B"/>
    <property type="match status" value="1"/>
</dbReference>
<dbReference type="InterPro" id="IPR002136">
    <property type="entry name" value="Ribosomal_uL4"/>
</dbReference>
<dbReference type="InterPro" id="IPR013005">
    <property type="entry name" value="Ribosomal_uL4-like"/>
</dbReference>
<dbReference type="InterPro" id="IPR023574">
    <property type="entry name" value="Ribosomal_uL4_dom_sf"/>
</dbReference>
<dbReference type="NCBIfam" id="TIGR03953">
    <property type="entry name" value="rplD_bact"/>
    <property type="match status" value="1"/>
</dbReference>
<dbReference type="PANTHER" id="PTHR10746">
    <property type="entry name" value="50S RIBOSOMAL PROTEIN L4"/>
    <property type="match status" value="1"/>
</dbReference>
<dbReference type="PANTHER" id="PTHR10746:SF17">
    <property type="entry name" value="LARGE RIBOSOMAL SUBUNIT PROTEIN UL4C"/>
    <property type="match status" value="1"/>
</dbReference>
<dbReference type="Pfam" id="PF00573">
    <property type="entry name" value="Ribosomal_L4"/>
    <property type="match status" value="1"/>
</dbReference>
<dbReference type="SUPFAM" id="SSF52166">
    <property type="entry name" value="Ribosomal protein L4"/>
    <property type="match status" value="1"/>
</dbReference>
<feature type="chain" id="PRO_0000129297" description="Large ribosomal subunit protein uL4">
    <location>
        <begin position="1"/>
        <end position="211"/>
    </location>
</feature>
<feature type="region of interest" description="Disordered" evidence="2">
    <location>
        <begin position="41"/>
        <end position="87"/>
    </location>
</feature>
<feature type="compositionally biased region" description="Basic residues" evidence="2">
    <location>
        <begin position="60"/>
        <end position="71"/>
    </location>
</feature>
<keyword id="KW-0687">Ribonucleoprotein</keyword>
<keyword id="KW-0689">Ribosomal protein</keyword>
<keyword id="KW-0694">RNA-binding</keyword>
<keyword id="KW-0699">rRNA-binding</keyword>
<protein>
    <recommendedName>
        <fullName evidence="1">Large ribosomal subunit protein uL4</fullName>
    </recommendedName>
    <alternativeName>
        <fullName evidence="3">50S ribosomal protein L4</fullName>
    </alternativeName>
</protein>
<organism>
    <name type="scientific">Parasynechococcus marenigrum (strain WH8102)</name>
    <dbReference type="NCBI Taxonomy" id="84588"/>
    <lineage>
        <taxon>Bacteria</taxon>
        <taxon>Bacillati</taxon>
        <taxon>Cyanobacteriota</taxon>
        <taxon>Cyanophyceae</taxon>
        <taxon>Synechococcales</taxon>
        <taxon>Prochlorococcaceae</taxon>
        <taxon>Parasynechococcus</taxon>
        <taxon>Parasynechococcus marenigrum</taxon>
    </lineage>
</organism>
<accession>Q7U4J9</accession>